<sequence length="139" mass="15689">MKPAARRRARECAVQALYSWQLSQNDIADVEYQFLAEQDVKDVDVLYFRELLSGVATNSAYLDGLMKPYLSRLLEELGQVEKAVLRIALFELSKRSDVPYKVAINEAIELAKTFGAEDSHKFVNGVLDKAAPVIRPNKK</sequence>
<gene>
    <name evidence="1" type="primary">nusB</name>
    <name type="ordered locus">SEN0400</name>
</gene>
<accession>B5QTG6</accession>
<feature type="chain" id="PRO_1000092581" description="Transcription antitermination protein NusB">
    <location>
        <begin position="1"/>
        <end position="139"/>
    </location>
</feature>
<comment type="function">
    <text evidence="1">Involved in transcription antitermination. Required for transcription of ribosomal RNA (rRNA) genes. Binds specifically to the boxA antiterminator sequence of the ribosomal RNA (rrn) operons.</text>
</comment>
<comment type="similarity">
    <text evidence="1">Belongs to the NusB family.</text>
</comment>
<protein>
    <recommendedName>
        <fullName evidence="1">Transcription antitermination protein NusB</fullName>
    </recommendedName>
    <alternativeName>
        <fullName evidence="1">Antitermination factor NusB</fullName>
    </alternativeName>
</protein>
<reference key="1">
    <citation type="journal article" date="2008" name="Genome Res.">
        <title>Comparative genome analysis of Salmonella enteritidis PT4 and Salmonella gallinarum 287/91 provides insights into evolutionary and host adaptation pathways.</title>
        <authorList>
            <person name="Thomson N.R."/>
            <person name="Clayton D.J."/>
            <person name="Windhorst D."/>
            <person name="Vernikos G."/>
            <person name="Davidson S."/>
            <person name="Churcher C."/>
            <person name="Quail M.A."/>
            <person name="Stevens M."/>
            <person name="Jones M.A."/>
            <person name="Watson M."/>
            <person name="Barron A."/>
            <person name="Layton A."/>
            <person name="Pickard D."/>
            <person name="Kingsley R.A."/>
            <person name="Bignell A."/>
            <person name="Clark L."/>
            <person name="Harris B."/>
            <person name="Ormond D."/>
            <person name="Abdellah Z."/>
            <person name="Brooks K."/>
            <person name="Cherevach I."/>
            <person name="Chillingworth T."/>
            <person name="Woodward J."/>
            <person name="Norberczak H."/>
            <person name="Lord A."/>
            <person name="Arrowsmith C."/>
            <person name="Jagels K."/>
            <person name="Moule S."/>
            <person name="Mungall K."/>
            <person name="Saunders M."/>
            <person name="Whitehead S."/>
            <person name="Chabalgoity J.A."/>
            <person name="Maskell D."/>
            <person name="Humphreys T."/>
            <person name="Roberts M."/>
            <person name="Barrow P.A."/>
            <person name="Dougan G."/>
            <person name="Parkhill J."/>
        </authorList>
    </citation>
    <scope>NUCLEOTIDE SEQUENCE [LARGE SCALE GENOMIC DNA]</scope>
    <source>
        <strain>P125109</strain>
    </source>
</reference>
<proteinExistence type="inferred from homology"/>
<keyword id="KW-0694">RNA-binding</keyword>
<keyword id="KW-0804">Transcription</keyword>
<keyword id="KW-0889">Transcription antitermination</keyword>
<keyword id="KW-0805">Transcription regulation</keyword>
<dbReference type="EMBL" id="AM933172">
    <property type="protein sequence ID" value="CAR31986.1"/>
    <property type="molecule type" value="Genomic_DNA"/>
</dbReference>
<dbReference type="RefSeq" id="WP_000801129.1">
    <property type="nucleotide sequence ID" value="NC_011294.1"/>
</dbReference>
<dbReference type="SMR" id="B5QTG6"/>
<dbReference type="GeneID" id="89550189"/>
<dbReference type="KEGG" id="set:SEN0400"/>
<dbReference type="HOGENOM" id="CLU_087843_4_1_6"/>
<dbReference type="Proteomes" id="UP000000613">
    <property type="component" value="Chromosome"/>
</dbReference>
<dbReference type="GO" id="GO:0005829">
    <property type="term" value="C:cytosol"/>
    <property type="evidence" value="ECO:0007669"/>
    <property type="project" value="TreeGrafter"/>
</dbReference>
<dbReference type="GO" id="GO:0003723">
    <property type="term" value="F:RNA binding"/>
    <property type="evidence" value="ECO:0007669"/>
    <property type="project" value="UniProtKB-UniRule"/>
</dbReference>
<dbReference type="GO" id="GO:0006353">
    <property type="term" value="P:DNA-templated transcription termination"/>
    <property type="evidence" value="ECO:0007669"/>
    <property type="project" value="UniProtKB-UniRule"/>
</dbReference>
<dbReference type="GO" id="GO:0031564">
    <property type="term" value="P:transcription antitermination"/>
    <property type="evidence" value="ECO:0007669"/>
    <property type="project" value="UniProtKB-KW"/>
</dbReference>
<dbReference type="CDD" id="cd00619">
    <property type="entry name" value="Terminator_NusB"/>
    <property type="match status" value="1"/>
</dbReference>
<dbReference type="FunFam" id="1.10.940.10:FF:000001">
    <property type="entry name" value="Transcription antitermination factor NusB"/>
    <property type="match status" value="1"/>
</dbReference>
<dbReference type="Gene3D" id="1.10.940.10">
    <property type="entry name" value="NusB-like"/>
    <property type="match status" value="1"/>
</dbReference>
<dbReference type="HAMAP" id="MF_00073">
    <property type="entry name" value="NusB"/>
    <property type="match status" value="1"/>
</dbReference>
<dbReference type="InterPro" id="IPR035926">
    <property type="entry name" value="NusB-like_sf"/>
</dbReference>
<dbReference type="InterPro" id="IPR011605">
    <property type="entry name" value="NusB_fam"/>
</dbReference>
<dbReference type="InterPro" id="IPR006027">
    <property type="entry name" value="NusB_RsmB_TIM44"/>
</dbReference>
<dbReference type="NCBIfam" id="TIGR01951">
    <property type="entry name" value="nusB"/>
    <property type="match status" value="1"/>
</dbReference>
<dbReference type="PANTHER" id="PTHR11078:SF3">
    <property type="entry name" value="ANTITERMINATION NUSB DOMAIN-CONTAINING PROTEIN"/>
    <property type="match status" value="1"/>
</dbReference>
<dbReference type="PANTHER" id="PTHR11078">
    <property type="entry name" value="N UTILIZATION SUBSTANCE PROTEIN B-RELATED"/>
    <property type="match status" value="1"/>
</dbReference>
<dbReference type="Pfam" id="PF01029">
    <property type="entry name" value="NusB"/>
    <property type="match status" value="1"/>
</dbReference>
<dbReference type="SUPFAM" id="SSF48013">
    <property type="entry name" value="NusB-like"/>
    <property type="match status" value="1"/>
</dbReference>
<organism>
    <name type="scientific">Salmonella enteritidis PT4 (strain P125109)</name>
    <dbReference type="NCBI Taxonomy" id="550537"/>
    <lineage>
        <taxon>Bacteria</taxon>
        <taxon>Pseudomonadati</taxon>
        <taxon>Pseudomonadota</taxon>
        <taxon>Gammaproteobacteria</taxon>
        <taxon>Enterobacterales</taxon>
        <taxon>Enterobacteriaceae</taxon>
        <taxon>Salmonella</taxon>
    </lineage>
</organism>
<evidence type="ECO:0000255" key="1">
    <source>
        <dbReference type="HAMAP-Rule" id="MF_00073"/>
    </source>
</evidence>
<name>NUSB_SALEP</name>